<reference key="1">
    <citation type="journal article" date="2006" name="Mol. Microbiol.">
        <title>Role of pathogenicity island-associated integrases in the genome plasticity of uropathogenic Escherichia coli strain 536.</title>
        <authorList>
            <person name="Hochhut B."/>
            <person name="Wilde C."/>
            <person name="Balling G."/>
            <person name="Middendorf B."/>
            <person name="Dobrindt U."/>
            <person name="Brzuszkiewicz E."/>
            <person name="Gottschalk G."/>
            <person name="Carniel E."/>
            <person name="Hacker J."/>
        </authorList>
    </citation>
    <scope>NUCLEOTIDE SEQUENCE [LARGE SCALE GENOMIC DNA]</scope>
    <source>
        <strain>536 / UPEC</strain>
    </source>
</reference>
<organism>
    <name type="scientific">Escherichia coli O6:K15:H31 (strain 536 / UPEC)</name>
    <dbReference type="NCBI Taxonomy" id="362663"/>
    <lineage>
        <taxon>Bacteria</taxon>
        <taxon>Pseudomonadati</taxon>
        <taxon>Pseudomonadota</taxon>
        <taxon>Gammaproteobacteria</taxon>
        <taxon>Enterobacterales</taxon>
        <taxon>Enterobacteriaceae</taxon>
        <taxon>Escherichia</taxon>
    </lineage>
</organism>
<proteinExistence type="inferred from homology"/>
<feature type="chain" id="PRO_1000083719" description="Autonomous glycyl radical cofactor">
    <location>
        <begin position="1"/>
        <end position="127"/>
    </location>
</feature>
<feature type="domain" description="Glycine radical" evidence="1">
    <location>
        <begin position="5"/>
        <end position="127"/>
    </location>
</feature>
<feature type="modified residue" description="N6-acetyllysine" evidence="1">
    <location>
        <position position="48"/>
    </location>
</feature>
<feature type="modified residue" description="N6-acetyllysine" evidence="1">
    <location>
        <position position="88"/>
    </location>
</feature>
<feature type="modified residue" description="N6-acetyllysine" evidence="1">
    <location>
        <position position="92"/>
    </location>
</feature>
<feature type="modified residue" description="Glycine radical" evidence="1">
    <location>
        <position position="102"/>
    </location>
</feature>
<sequence length="127" mass="14268">MITGIQITKAANDDLLNSFWLLDSEKGEARCIVAKAGFAEDEVVAVSKLGDIEYREVPVEVKPEVRVEGGQHLNVNVLRRETLEDAVKHPEKYPQLTIRVSGYAVRFNSLTPEQQRDVIARTFTESL</sequence>
<dbReference type="EMBL" id="CP000247">
    <property type="protein sequence ID" value="ABG70570.1"/>
    <property type="molecule type" value="Genomic_DNA"/>
</dbReference>
<dbReference type="RefSeq" id="WP_000627804.1">
    <property type="nucleotide sequence ID" value="NC_008253.1"/>
</dbReference>
<dbReference type="SMR" id="Q0TEQ9"/>
<dbReference type="GeneID" id="89517377"/>
<dbReference type="KEGG" id="ecp:ECP_2581"/>
<dbReference type="HOGENOM" id="CLU_133780_0_0_6"/>
<dbReference type="Proteomes" id="UP000009182">
    <property type="component" value="Chromosome"/>
</dbReference>
<dbReference type="GO" id="GO:0005829">
    <property type="term" value="C:cytosol"/>
    <property type="evidence" value="ECO:0007669"/>
    <property type="project" value="TreeGrafter"/>
</dbReference>
<dbReference type="GO" id="GO:0008861">
    <property type="term" value="F:formate C-acetyltransferase activity"/>
    <property type="evidence" value="ECO:0007669"/>
    <property type="project" value="TreeGrafter"/>
</dbReference>
<dbReference type="FunFam" id="3.20.70.20:FF:000002">
    <property type="entry name" value="Autonomous glycyl radical cofactor"/>
    <property type="match status" value="1"/>
</dbReference>
<dbReference type="Gene3D" id="3.20.70.20">
    <property type="match status" value="1"/>
</dbReference>
<dbReference type="HAMAP" id="MF_00806">
    <property type="entry name" value="GrcA"/>
    <property type="match status" value="1"/>
</dbReference>
<dbReference type="InterPro" id="IPR050244">
    <property type="entry name" value="Auton_GlycylRad_Cofactor"/>
</dbReference>
<dbReference type="InterPro" id="IPR019777">
    <property type="entry name" value="Form_AcTrfase_GR_CS"/>
</dbReference>
<dbReference type="InterPro" id="IPR001150">
    <property type="entry name" value="Gly_radical"/>
</dbReference>
<dbReference type="InterPro" id="IPR011140">
    <property type="entry name" value="Glycyl_radical_cofactor_GrcA"/>
</dbReference>
<dbReference type="NCBIfam" id="TIGR04365">
    <property type="entry name" value="spare_glycyl"/>
    <property type="match status" value="1"/>
</dbReference>
<dbReference type="PANTHER" id="PTHR30191">
    <property type="entry name" value="FORMATE ACETYLTRANSFERASE"/>
    <property type="match status" value="1"/>
</dbReference>
<dbReference type="PANTHER" id="PTHR30191:SF0">
    <property type="entry name" value="FORMATE ACETYLTRANSFERASE 1"/>
    <property type="match status" value="1"/>
</dbReference>
<dbReference type="Pfam" id="PF01228">
    <property type="entry name" value="Gly_radical"/>
    <property type="match status" value="1"/>
</dbReference>
<dbReference type="PIRSF" id="PIRSF000378">
    <property type="entry name" value="Gly_radicl_yfiD"/>
    <property type="match status" value="1"/>
</dbReference>
<dbReference type="SUPFAM" id="SSF51998">
    <property type="entry name" value="PFL-like glycyl radical enzymes"/>
    <property type="match status" value="1"/>
</dbReference>
<dbReference type="PROSITE" id="PS00850">
    <property type="entry name" value="GLY_RADICAL_1"/>
    <property type="match status" value="1"/>
</dbReference>
<dbReference type="PROSITE" id="PS51149">
    <property type="entry name" value="GLY_RADICAL_2"/>
    <property type="match status" value="1"/>
</dbReference>
<name>GRCA_ECOL5</name>
<protein>
    <recommendedName>
        <fullName evidence="1">Autonomous glycyl radical cofactor</fullName>
    </recommendedName>
</protein>
<accession>Q0TEQ9</accession>
<gene>
    <name evidence="1" type="primary">grcA</name>
    <name type="ordered locus">ECP_2581</name>
</gene>
<keyword id="KW-0007">Acetylation</keyword>
<keyword id="KW-0556">Organic radical</keyword>
<evidence type="ECO:0000255" key="1">
    <source>
        <dbReference type="HAMAP-Rule" id="MF_00806"/>
    </source>
</evidence>
<comment type="function">
    <text evidence="1">Acts as a radical domain for damaged PFL and possibly other radical proteins.</text>
</comment>